<comment type="function">
    <text evidence="1">An aminoacyl-tRNA editing enzyme that deacylates mischarged D-aminoacyl-tRNAs. Also deacylates mischarged glycyl-tRNA(Ala), protecting cells against glycine mischarging by AlaRS. Acts via tRNA-based rather than protein-based catalysis; rejects L-amino acids rather than detecting D-amino acids in the active site. By recycling D-aminoacyl-tRNA to D-amino acids and free tRNA molecules, this enzyme counteracts the toxicity associated with the formation of D-aminoacyl-tRNA entities in vivo and helps enforce protein L-homochirality.</text>
</comment>
<comment type="catalytic activity">
    <reaction evidence="1">
        <text>glycyl-tRNA(Ala) + H2O = tRNA(Ala) + glycine + H(+)</text>
        <dbReference type="Rhea" id="RHEA:53744"/>
        <dbReference type="Rhea" id="RHEA-COMP:9657"/>
        <dbReference type="Rhea" id="RHEA-COMP:13640"/>
        <dbReference type="ChEBI" id="CHEBI:15377"/>
        <dbReference type="ChEBI" id="CHEBI:15378"/>
        <dbReference type="ChEBI" id="CHEBI:57305"/>
        <dbReference type="ChEBI" id="CHEBI:78442"/>
        <dbReference type="ChEBI" id="CHEBI:78522"/>
        <dbReference type="EC" id="3.1.1.96"/>
    </reaction>
</comment>
<comment type="catalytic activity">
    <reaction evidence="1">
        <text>a D-aminoacyl-tRNA + H2O = a tRNA + a D-alpha-amino acid + H(+)</text>
        <dbReference type="Rhea" id="RHEA:13953"/>
        <dbReference type="Rhea" id="RHEA-COMP:10123"/>
        <dbReference type="Rhea" id="RHEA-COMP:10124"/>
        <dbReference type="ChEBI" id="CHEBI:15377"/>
        <dbReference type="ChEBI" id="CHEBI:15378"/>
        <dbReference type="ChEBI" id="CHEBI:59871"/>
        <dbReference type="ChEBI" id="CHEBI:78442"/>
        <dbReference type="ChEBI" id="CHEBI:79333"/>
        <dbReference type="EC" id="3.1.1.96"/>
    </reaction>
</comment>
<comment type="subunit">
    <text evidence="1">Homodimer.</text>
</comment>
<comment type="subcellular location">
    <subcellularLocation>
        <location evidence="1">Cytoplasm</location>
    </subcellularLocation>
</comment>
<comment type="domain">
    <text evidence="1">A Gly-cisPro motif from one monomer fits into the active site of the other monomer to allow specific chiral rejection of L-amino acids.</text>
</comment>
<comment type="similarity">
    <text evidence="1">Belongs to the DTD family.</text>
</comment>
<evidence type="ECO:0000255" key="1">
    <source>
        <dbReference type="HAMAP-Rule" id="MF_00518"/>
    </source>
</evidence>
<accession>B2G6X7</accession>
<reference key="1">
    <citation type="journal article" date="2008" name="DNA Res.">
        <title>Comparative genome analysis of Lactobacillus reuteri and Lactobacillus fermentum reveal a genomic island for reuterin and cobalamin production.</title>
        <authorList>
            <person name="Morita H."/>
            <person name="Toh H."/>
            <person name="Fukuda S."/>
            <person name="Horikawa H."/>
            <person name="Oshima K."/>
            <person name="Suzuki T."/>
            <person name="Murakami M."/>
            <person name="Hisamatsu S."/>
            <person name="Kato Y."/>
            <person name="Takizawa T."/>
            <person name="Fukuoka H."/>
            <person name="Yoshimura T."/>
            <person name="Itoh K."/>
            <person name="O'Sullivan D.J."/>
            <person name="McKay L.L."/>
            <person name="Ohno H."/>
            <person name="Kikuchi J."/>
            <person name="Masaoka T."/>
            <person name="Hattori M."/>
        </authorList>
    </citation>
    <scope>NUCLEOTIDE SEQUENCE [LARGE SCALE GENOMIC DNA]</scope>
    <source>
        <strain>JCM 1112</strain>
    </source>
</reference>
<name>DTD_LIMRJ</name>
<keyword id="KW-0963">Cytoplasm</keyword>
<keyword id="KW-0378">Hydrolase</keyword>
<keyword id="KW-0694">RNA-binding</keyword>
<keyword id="KW-0820">tRNA-binding</keyword>
<protein>
    <recommendedName>
        <fullName evidence="1">D-aminoacyl-tRNA deacylase</fullName>
        <shortName evidence="1">DTD</shortName>
        <ecNumber evidence="1">3.1.1.96</ecNumber>
    </recommendedName>
    <alternativeName>
        <fullName evidence="1">Gly-tRNA(Ala) deacylase</fullName>
    </alternativeName>
</protein>
<proteinExistence type="inferred from homology"/>
<gene>
    <name evidence="1" type="primary">dtd</name>
    <name type="ordered locus">LAR_0693</name>
</gene>
<dbReference type="EC" id="3.1.1.96" evidence="1"/>
<dbReference type="EMBL" id="AP007281">
    <property type="protein sequence ID" value="BAG25209.1"/>
    <property type="molecule type" value="Genomic_DNA"/>
</dbReference>
<dbReference type="RefSeq" id="WP_011953438.1">
    <property type="nucleotide sequence ID" value="NC_010609.1"/>
</dbReference>
<dbReference type="SMR" id="B2G6X7"/>
<dbReference type="KEGG" id="lrf:LAR_0693"/>
<dbReference type="HOGENOM" id="CLU_076901_1_0_9"/>
<dbReference type="GO" id="GO:0005737">
    <property type="term" value="C:cytoplasm"/>
    <property type="evidence" value="ECO:0007669"/>
    <property type="project" value="UniProtKB-SubCell"/>
</dbReference>
<dbReference type="GO" id="GO:0051500">
    <property type="term" value="F:D-tyrosyl-tRNA(Tyr) deacylase activity"/>
    <property type="evidence" value="ECO:0007669"/>
    <property type="project" value="TreeGrafter"/>
</dbReference>
<dbReference type="GO" id="GO:0106026">
    <property type="term" value="F:Gly-tRNA(Ala) deacylase activity"/>
    <property type="evidence" value="ECO:0007669"/>
    <property type="project" value="UniProtKB-UniRule"/>
</dbReference>
<dbReference type="GO" id="GO:0043908">
    <property type="term" value="F:Ser(Gly)-tRNA(Ala) hydrolase activity"/>
    <property type="evidence" value="ECO:0007669"/>
    <property type="project" value="UniProtKB-UniRule"/>
</dbReference>
<dbReference type="GO" id="GO:0000049">
    <property type="term" value="F:tRNA binding"/>
    <property type="evidence" value="ECO:0007669"/>
    <property type="project" value="UniProtKB-UniRule"/>
</dbReference>
<dbReference type="GO" id="GO:0019478">
    <property type="term" value="P:D-amino acid catabolic process"/>
    <property type="evidence" value="ECO:0007669"/>
    <property type="project" value="UniProtKB-UniRule"/>
</dbReference>
<dbReference type="CDD" id="cd00563">
    <property type="entry name" value="Dtyr_deacylase"/>
    <property type="match status" value="1"/>
</dbReference>
<dbReference type="FunFam" id="3.50.80.10:FF:000001">
    <property type="entry name" value="D-aminoacyl-tRNA deacylase"/>
    <property type="match status" value="1"/>
</dbReference>
<dbReference type="Gene3D" id="3.50.80.10">
    <property type="entry name" value="D-tyrosyl-tRNA(Tyr) deacylase"/>
    <property type="match status" value="1"/>
</dbReference>
<dbReference type="HAMAP" id="MF_00518">
    <property type="entry name" value="Deacylase_Dtd"/>
    <property type="match status" value="1"/>
</dbReference>
<dbReference type="InterPro" id="IPR003732">
    <property type="entry name" value="Daa-tRNA_deacyls_DTD"/>
</dbReference>
<dbReference type="InterPro" id="IPR023509">
    <property type="entry name" value="DTD-like_sf"/>
</dbReference>
<dbReference type="NCBIfam" id="TIGR00256">
    <property type="entry name" value="D-aminoacyl-tRNA deacylase"/>
    <property type="match status" value="1"/>
</dbReference>
<dbReference type="PANTHER" id="PTHR10472:SF5">
    <property type="entry name" value="D-AMINOACYL-TRNA DEACYLASE 1"/>
    <property type="match status" value="1"/>
</dbReference>
<dbReference type="PANTHER" id="PTHR10472">
    <property type="entry name" value="D-TYROSYL-TRNA TYR DEACYLASE"/>
    <property type="match status" value="1"/>
</dbReference>
<dbReference type="Pfam" id="PF02580">
    <property type="entry name" value="Tyr_Deacylase"/>
    <property type="match status" value="1"/>
</dbReference>
<dbReference type="SUPFAM" id="SSF69500">
    <property type="entry name" value="DTD-like"/>
    <property type="match status" value="1"/>
</dbReference>
<feature type="chain" id="PRO_1000127548" description="D-aminoacyl-tRNA deacylase">
    <location>
        <begin position="1"/>
        <end position="145"/>
    </location>
</feature>
<feature type="short sequence motif" description="Gly-cisPro motif, important for rejection of L-amino acids" evidence="1">
    <location>
        <begin position="137"/>
        <end position="138"/>
    </location>
</feature>
<sequence>MRVVLQKVNHAAVSIDDEVVGKIGLGYFLLVGFAPDDTEEKLNYLVHKITNLRVFEDENGKMNKGLRDVNGAILSVSQFTLYADTKHGNRPGFSQAASPEIAEPLYDLFNQKLAATGIPVETGHFGAMMKIDLENDGPTTIIYER</sequence>
<organism>
    <name type="scientific">Limosilactobacillus reuteri subsp. reuteri (strain JCM 1112)</name>
    <name type="common">Lactobacillus reuteri</name>
    <dbReference type="NCBI Taxonomy" id="557433"/>
    <lineage>
        <taxon>Bacteria</taxon>
        <taxon>Bacillati</taxon>
        <taxon>Bacillota</taxon>
        <taxon>Bacilli</taxon>
        <taxon>Lactobacillales</taxon>
        <taxon>Lactobacillaceae</taxon>
        <taxon>Limosilactobacillus</taxon>
    </lineage>
</organism>